<protein>
    <recommendedName>
        <fullName>T-box transcription factor TBX20</fullName>
        <shortName>T-box protein 20</shortName>
    </recommendedName>
</protein>
<sequence>MEYTPSPKPQLSSRANAFSIAALMSSGTPKDKETQESTIKPLEQFVEKSSCSQPLGDISIVDSHGEFTNSPSSLCTEPLIPTTPVIPSEEMAKISCSLETKELWDKFHDLGTEMIITKSGRRMFPTIRVSFSGVDADAKYIVLMDIVPVDNKRYRYAYHRSSWLVAGKADPPLPARLYVHPDSPFTGEQLLKQMVSFEKVKLTNNELDQHGHIILNSMHKYQPRVHIIKKKDHTASLLNLKSEEFRTFIFQETVFTAVTAYQNQLITKLKIDSNPFAKGFRDSSRLTDIERESVESLIQKHSYARSPIRTYGDEDVLGEDGQTMQSRGSAFTTSENLSLSSWVSSTSGFSGFQHPQSLTALGTSTASLATPIPHPIQGTLPPYSRLGMPITPSALASSMQGSGPTFPSFHMPRYHHYFQQGPYAAIQGLRHSSAVMTPFV</sequence>
<name>TBX20_XENTR</name>
<feature type="chain" id="PRO_0000262695" description="T-box transcription factor TBX20">
    <location>
        <begin position="1"/>
        <end position="440"/>
    </location>
</feature>
<feature type="DNA-binding region" description="T-box" evidence="2">
    <location>
        <begin position="103"/>
        <end position="282"/>
    </location>
</feature>
<proteinExistence type="evidence at transcript level"/>
<gene>
    <name type="primary">tbx20</name>
</gene>
<accession>Q3SA46</accession>
<comment type="function">
    <text evidence="1">Transcriptional regulator that may be involved in heart developmental processes.</text>
</comment>
<comment type="subcellular location">
    <subcellularLocation>
        <location evidence="2">Nucleus</location>
    </subcellularLocation>
</comment>
<comment type="developmental stage">
    <text evidence="3">At late neurula stage (stage 20), strongly expressed in the developing cement gland and in the bilateral heart primordia. Expression in the cement gland decreases from stage 25 onward, while expression continues to be strongly detected in the developing heart. In the heart-forming region at stage 25, expression seen in the heart field formed by fusion of the bilateral heart primordia and also seen in the hindbrain (rhombencephalon) at this stage, corresponding to the second and fourth rhombomeres. At stage 29/30, expression persists in these regions and also weakly detected in a more posterior region of the hindbrain. At stage 33, when heart looping is initiated, broadly expressed in the heart tube, ventricle, atrium and both branches of the sinus venosus. During heart looping (stage 36), expressed at a higher level in the atrium than in the ventricle.</text>
</comment>
<keyword id="KW-0217">Developmental protein</keyword>
<keyword id="KW-0238">DNA-binding</keyword>
<keyword id="KW-0539">Nucleus</keyword>
<keyword id="KW-1185">Reference proteome</keyword>
<keyword id="KW-0804">Transcription</keyword>
<keyword id="KW-0805">Transcription regulation</keyword>
<reference key="1">
    <citation type="journal article" date="2006" name="Dev. Dyn.">
        <title>Developmental expression patterns of Tb x 1, Tb x 2, Tb x 5, and Tb x 20 in Xenopus tropicalis.</title>
        <authorList>
            <person name="Showell C."/>
            <person name="Christine K.S."/>
            <person name="Mandel E.M."/>
            <person name="Conlon F.L."/>
        </authorList>
    </citation>
    <scope>NUCLEOTIDE SEQUENCE [MRNA]</scope>
    <scope>DEVELOPMENTAL STAGE</scope>
</reference>
<organism>
    <name type="scientific">Xenopus tropicalis</name>
    <name type="common">Western clawed frog</name>
    <name type="synonym">Silurana tropicalis</name>
    <dbReference type="NCBI Taxonomy" id="8364"/>
    <lineage>
        <taxon>Eukaryota</taxon>
        <taxon>Metazoa</taxon>
        <taxon>Chordata</taxon>
        <taxon>Craniata</taxon>
        <taxon>Vertebrata</taxon>
        <taxon>Euteleostomi</taxon>
        <taxon>Amphibia</taxon>
        <taxon>Batrachia</taxon>
        <taxon>Anura</taxon>
        <taxon>Pipoidea</taxon>
        <taxon>Pipidae</taxon>
        <taxon>Xenopodinae</taxon>
        <taxon>Xenopus</taxon>
        <taxon>Silurana</taxon>
    </lineage>
</organism>
<dbReference type="EMBL" id="DQ124208">
    <property type="protein sequence ID" value="AAZ79653.1"/>
    <property type="molecule type" value="mRNA"/>
</dbReference>
<dbReference type="RefSeq" id="NP_001030292.1">
    <property type="nucleotide sequence ID" value="NM_001035120.1"/>
</dbReference>
<dbReference type="SMR" id="Q3SA46"/>
<dbReference type="FunCoup" id="Q3SA46">
    <property type="interactions" value="1552"/>
</dbReference>
<dbReference type="STRING" id="8364.ENSXETP00000005062"/>
<dbReference type="PaxDb" id="8364-ENSXETP00000028708"/>
<dbReference type="GeneID" id="619590"/>
<dbReference type="KEGG" id="xtr:619590"/>
<dbReference type="AGR" id="Xenbase:XB-GENE-487334"/>
<dbReference type="CTD" id="57057"/>
<dbReference type="Xenbase" id="XB-GENE-487334">
    <property type="gene designation" value="tbx20"/>
</dbReference>
<dbReference type="eggNOG" id="KOG3586">
    <property type="taxonomic scope" value="Eukaryota"/>
</dbReference>
<dbReference type="HOGENOM" id="CLU_014430_7_1_1"/>
<dbReference type="InParanoid" id="Q3SA46"/>
<dbReference type="OMA" id="EDGHTTH"/>
<dbReference type="OrthoDB" id="7442607at2759"/>
<dbReference type="PhylomeDB" id="Q3SA46"/>
<dbReference type="TreeFam" id="TF106341"/>
<dbReference type="Proteomes" id="UP000008143">
    <property type="component" value="Chromosome 6"/>
</dbReference>
<dbReference type="Bgee" id="ENSXETG00000013110">
    <property type="expression patterns" value="Expressed in heart and 8 other cell types or tissues"/>
</dbReference>
<dbReference type="ExpressionAtlas" id="Q3SA46">
    <property type="expression patterns" value="baseline"/>
</dbReference>
<dbReference type="GO" id="GO:0005634">
    <property type="term" value="C:nucleus"/>
    <property type="evidence" value="ECO:0007669"/>
    <property type="project" value="UniProtKB-SubCell"/>
</dbReference>
<dbReference type="GO" id="GO:0003700">
    <property type="term" value="F:DNA-binding transcription factor activity"/>
    <property type="evidence" value="ECO:0007669"/>
    <property type="project" value="InterPro"/>
</dbReference>
<dbReference type="GO" id="GO:0000978">
    <property type="term" value="F:RNA polymerase II cis-regulatory region sequence-specific DNA binding"/>
    <property type="evidence" value="ECO:0007669"/>
    <property type="project" value="InterPro"/>
</dbReference>
<dbReference type="GO" id="GO:0007507">
    <property type="term" value="P:heart development"/>
    <property type="evidence" value="ECO:0007669"/>
    <property type="project" value="UniProtKB-ARBA"/>
</dbReference>
<dbReference type="GO" id="GO:0045893">
    <property type="term" value="P:positive regulation of DNA-templated transcription"/>
    <property type="evidence" value="ECO:0007669"/>
    <property type="project" value="InterPro"/>
</dbReference>
<dbReference type="CDD" id="cd20193">
    <property type="entry name" value="T-box_TBX20-like"/>
    <property type="match status" value="1"/>
</dbReference>
<dbReference type="FunFam" id="2.60.40.820:FF:000008">
    <property type="entry name" value="T-box transcription factor TBX20"/>
    <property type="match status" value="1"/>
</dbReference>
<dbReference type="Gene3D" id="2.60.40.820">
    <property type="entry name" value="Transcription factor, T-box"/>
    <property type="match status" value="1"/>
</dbReference>
<dbReference type="InterPro" id="IPR008967">
    <property type="entry name" value="p53-like_TF_DNA-bd_sf"/>
</dbReference>
<dbReference type="InterPro" id="IPR046360">
    <property type="entry name" value="T-box_DNA-bd"/>
</dbReference>
<dbReference type="InterPro" id="IPR036960">
    <property type="entry name" value="T-box_sf"/>
</dbReference>
<dbReference type="InterPro" id="IPR001699">
    <property type="entry name" value="TF_T-box"/>
</dbReference>
<dbReference type="InterPro" id="IPR018186">
    <property type="entry name" value="TF_T-box_CS"/>
</dbReference>
<dbReference type="PANTHER" id="PTHR11267">
    <property type="entry name" value="T-BOX PROTEIN-RELATED"/>
    <property type="match status" value="1"/>
</dbReference>
<dbReference type="PANTHER" id="PTHR11267:SF190">
    <property type="entry name" value="T-BOX TRANSCRIPTION FACTOR TBX20"/>
    <property type="match status" value="1"/>
</dbReference>
<dbReference type="Pfam" id="PF00907">
    <property type="entry name" value="T-box"/>
    <property type="match status" value="1"/>
</dbReference>
<dbReference type="PRINTS" id="PR00937">
    <property type="entry name" value="TBOX"/>
</dbReference>
<dbReference type="SMART" id="SM00425">
    <property type="entry name" value="TBOX"/>
    <property type="match status" value="1"/>
</dbReference>
<dbReference type="SUPFAM" id="SSF49417">
    <property type="entry name" value="p53-like transcription factors"/>
    <property type="match status" value="1"/>
</dbReference>
<dbReference type="PROSITE" id="PS01283">
    <property type="entry name" value="TBOX_1"/>
    <property type="match status" value="1"/>
</dbReference>
<dbReference type="PROSITE" id="PS01264">
    <property type="entry name" value="TBOX_2"/>
    <property type="match status" value="1"/>
</dbReference>
<dbReference type="PROSITE" id="PS50252">
    <property type="entry name" value="TBOX_3"/>
    <property type="match status" value="1"/>
</dbReference>
<evidence type="ECO:0000250" key="1"/>
<evidence type="ECO:0000255" key="2">
    <source>
        <dbReference type="PROSITE-ProRule" id="PRU00201"/>
    </source>
</evidence>
<evidence type="ECO:0000269" key="3">
    <source>
    </source>
</evidence>